<sequence length="383" mass="42452">MKNICLLGATGSIGEQTLDVLRMHQDQFRLVSMTFGKNAEKAIPLIRTFQPKYIAVGDMDTYQKVKEASFSHECQIGIGEEGLIEAAVMDEVDIVVNALLGSVGLIPTLKAIEQKKTIALANKETLVTAGHIVKGHAKRYGVPLLPVDSEHSAIFQALQGEQCKNIERLVITASGGSFRDKTRQELESVTIADALNHPNWSMGAKITIDSATMMNKGLEVIEAHWLFDIPYEQIDVVLHKESIIHSMVEFHDRSVIAQLGNPDMRVPIQYALTYPDRLPLPETKRLELWEIGSLHFAKADFERFRCLQFAFESGKIGGTMPTVLNAANEEAVAAFLAGRISFLSIEDLIEQALDRHSVIQDPSLADIQEVDKDTRGYVNSILT</sequence>
<organism>
    <name type="scientific">Bacillus velezensis (strain DSM 23117 / BGSC 10A6 / LMG 26770 / FZB42)</name>
    <name type="common">Bacillus amyloliquefaciens subsp. plantarum</name>
    <dbReference type="NCBI Taxonomy" id="326423"/>
    <lineage>
        <taxon>Bacteria</taxon>
        <taxon>Bacillati</taxon>
        <taxon>Bacillota</taxon>
        <taxon>Bacilli</taxon>
        <taxon>Bacillales</taxon>
        <taxon>Bacillaceae</taxon>
        <taxon>Bacillus</taxon>
        <taxon>Bacillus amyloliquefaciens group</taxon>
    </lineage>
</organism>
<keyword id="KW-0414">Isoprene biosynthesis</keyword>
<keyword id="KW-0464">Manganese</keyword>
<keyword id="KW-0479">Metal-binding</keyword>
<keyword id="KW-0521">NADP</keyword>
<keyword id="KW-0560">Oxidoreductase</keyword>
<gene>
    <name evidence="1" type="primary">dxr</name>
    <name type="ordered locus">RBAM_016390</name>
</gene>
<name>DXR_BACVZ</name>
<proteinExistence type="inferred from homology"/>
<reference key="1">
    <citation type="journal article" date="2007" name="Nat. Biotechnol.">
        <title>Comparative analysis of the complete genome sequence of the plant growth-promoting bacterium Bacillus amyloliquefaciens FZB42.</title>
        <authorList>
            <person name="Chen X.H."/>
            <person name="Koumoutsi A."/>
            <person name="Scholz R."/>
            <person name="Eisenreich A."/>
            <person name="Schneider K."/>
            <person name="Heinemeyer I."/>
            <person name="Morgenstern B."/>
            <person name="Voss B."/>
            <person name="Hess W.R."/>
            <person name="Reva O."/>
            <person name="Junge H."/>
            <person name="Voigt B."/>
            <person name="Jungblut P.R."/>
            <person name="Vater J."/>
            <person name="Suessmuth R."/>
            <person name="Liesegang H."/>
            <person name="Strittmatter A."/>
            <person name="Gottschalk G."/>
            <person name="Borriss R."/>
        </authorList>
    </citation>
    <scope>NUCLEOTIDE SEQUENCE [LARGE SCALE GENOMIC DNA]</scope>
    <source>
        <strain>DSM 23117 / BGSC 10A6 / LMG 26770 / FZB42</strain>
    </source>
</reference>
<dbReference type="EC" id="1.1.1.267" evidence="1"/>
<dbReference type="EMBL" id="CP000560">
    <property type="protein sequence ID" value="ABS74002.1"/>
    <property type="molecule type" value="Genomic_DNA"/>
</dbReference>
<dbReference type="RefSeq" id="WP_012117564.1">
    <property type="nucleotide sequence ID" value="NC_009725.2"/>
</dbReference>
<dbReference type="SMR" id="A7Z4S6"/>
<dbReference type="GeneID" id="93080772"/>
<dbReference type="KEGG" id="bay:RBAM_016390"/>
<dbReference type="HOGENOM" id="CLU_035714_4_0_9"/>
<dbReference type="UniPathway" id="UPA00056">
    <property type="reaction ID" value="UER00092"/>
</dbReference>
<dbReference type="Proteomes" id="UP000001120">
    <property type="component" value="Chromosome"/>
</dbReference>
<dbReference type="GO" id="GO:0030604">
    <property type="term" value="F:1-deoxy-D-xylulose-5-phosphate reductoisomerase activity"/>
    <property type="evidence" value="ECO:0007669"/>
    <property type="project" value="UniProtKB-UniRule"/>
</dbReference>
<dbReference type="GO" id="GO:0030145">
    <property type="term" value="F:manganese ion binding"/>
    <property type="evidence" value="ECO:0007669"/>
    <property type="project" value="TreeGrafter"/>
</dbReference>
<dbReference type="GO" id="GO:0070402">
    <property type="term" value="F:NADPH binding"/>
    <property type="evidence" value="ECO:0007669"/>
    <property type="project" value="InterPro"/>
</dbReference>
<dbReference type="GO" id="GO:0051484">
    <property type="term" value="P:isopentenyl diphosphate biosynthetic process, methylerythritol 4-phosphate pathway involved in terpenoid biosynthetic process"/>
    <property type="evidence" value="ECO:0007669"/>
    <property type="project" value="TreeGrafter"/>
</dbReference>
<dbReference type="FunFam" id="3.40.50.720:FF:000045">
    <property type="entry name" value="1-deoxy-D-xylulose 5-phosphate reductoisomerase"/>
    <property type="match status" value="1"/>
</dbReference>
<dbReference type="Gene3D" id="1.10.1740.10">
    <property type="match status" value="1"/>
</dbReference>
<dbReference type="Gene3D" id="3.40.50.720">
    <property type="entry name" value="NAD(P)-binding Rossmann-like Domain"/>
    <property type="match status" value="1"/>
</dbReference>
<dbReference type="HAMAP" id="MF_00183">
    <property type="entry name" value="DXP_reductoisom"/>
    <property type="match status" value="1"/>
</dbReference>
<dbReference type="InterPro" id="IPR003821">
    <property type="entry name" value="DXP_reductoisomerase"/>
</dbReference>
<dbReference type="InterPro" id="IPR013644">
    <property type="entry name" value="DXP_reductoisomerase_C"/>
</dbReference>
<dbReference type="InterPro" id="IPR013512">
    <property type="entry name" value="DXP_reductoisomerase_N"/>
</dbReference>
<dbReference type="InterPro" id="IPR026877">
    <property type="entry name" value="DXPR_C"/>
</dbReference>
<dbReference type="InterPro" id="IPR036169">
    <property type="entry name" value="DXPR_C_sf"/>
</dbReference>
<dbReference type="InterPro" id="IPR036291">
    <property type="entry name" value="NAD(P)-bd_dom_sf"/>
</dbReference>
<dbReference type="NCBIfam" id="TIGR00243">
    <property type="entry name" value="Dxr"/>
    <property type="match status" value="1"/>
</dbReference>
<dbReference type="NCBIfam" id="NF009114">
    <property type="entry name" value="PRK12464.1"/>
    <property type="match status" value="1"/>
</dbReference>
<dbReference type="PANTHER" id="PTHR30525">
    <property type="entry name" value="1-DEOXY-D-XYLULOSE 5-PHOSPHATE REDUCTOISOMERASE"/>
    <property type="match status" value="1"/>
</dbReference>
<dbReference type="PANTHER" id="PTHR30525:SF0">
    <property type="entry name" value="1-DEOXY-D-XYLULOSE 5-PHOSPHATE REDUCTOISOMERASE, CHLOROPLASTIC"/>
    <property type="match status" value="1"/>
</dbReference>
<dbReference type="Pfam" id="PF08436">
    <property type="entry name" value="DXP_redisom_C"/>
    <property type="match status" value="1"/>
</dbReference>
<dbReference type="Pfam" id="PF02670">
    <property type="entry name" value="DXP_reductoisom"/>
    <property type="match status" value="1"/>
</dbReference>
<dbReference type="Pfam" id="PF13288">
    <property type="entry name" value="DXPR_C"/>
    <property type="match status" value="1"/>
</dbReference>
<dbReference type="PIRSF" id="PIRSF006205">
    <property type="entry name" value="Dxp_reductismrs"/>
    <property type="match status" value="1"/>
</dbReference>
<dbReference type="SUPFAM" id="SSF69055">
    <property type="entry name" value="1-deoxy-D-xylulose-5-phosphate reductoisomerase, C-terminal domain"/>
    <property type="match status" value="1"/>
</dbReference>
<dbReference type="SUPFAM" id="SSF55347">
    <property type="entry name" value="Glyceraldehyde-3-phosphate dehydrogenase-like, C-terminal domain"/>
    <property type="match status" value="1"/>
</dbReference>
<dbReference type="SUPFAM" id="SSF51735">
    <property type="entry name" value="NAD(P)-binding Rossmann-fold domains"/>
    <property type="match status" value="1"/>
</dbReference>
<accession>A7Z4S6</accession>
<comment type="function">
    <text evidence="1">Catalyzes the NADPH-dependent rearrangement and reduction of 1-deoxy-D-xylulose-5-phosphate (DXP) to 2-C-methyl-D-erythritol 4-phosphate (MEP).</text>
</comment>
<comment type="catalytic activity">
    <reaction evidence="1">
        <text>2-C-methyl-D-erythritol 4-phosphate + NADP(+) = 1-deoxy-D-xylulose 5-phosphate + NADPH + H(+)</text>
        <dbReference type="Rhea" id="RHEA:13717"/>
        <dbReference type="ChEBI" id="CHEBI:15378"/>
        <dbReference type="ChEBI" id="CHEBI:57783"/>
        <dbReference type="ChEBI" id="CHEBI:57792"/>
        <dbReference type="ChEBI" id="CHEBI:58262"/>
        <dbReference type="ChEBI" id="CHEBI:58349"/>
        <dbReference type="EC" id="1.1.1.267"/>
    </reaction>
    <physiologicalReaction direction="right-to-left" evidence="1">
        <dbReference type="Rhea" id="RHEA:13719"/>
    </physiologicalReaction>
</comment>
<comment type="cofactor">
    <cofactor evidence="1">
        <name>Mg(2+)</name>
        <dbReference type="ChEBI" id="CHEBI:18420"/>
    </cofactor>
    <cofactor evidence="1">
        <name>Mn(2+)</name>
        <dbReference type="ChEBI" id="CHEBI:29035"/>
    </cofactor>
</comment>
<comment type="pathway">
    <text evidence="1">Isoprenoid biosynthesis; isopentenyl diphosphate biosynthesis via DXP pathway; isopentenyl diphosphate from 1-deoxy-D-xylulose 5-phosphate: step 1/6.</text>
</comment>
<comment type="similarity">
    <text evidence="1">Belongs to the DXR family.</text>
</comment>
<feature type="chain" id="PRO_1000020216" description="1-deoxy-D-xylulose 5-phosphate reductoisomerase">
    <location>
        <begin position="1"/>
        <end position="383"/>
    </location>
</feature>
<feature type="binding site" evidence="1">
    <location>
        <position position="10"/>
    </location>
    <ligand>
        <name>NADPH</name>
        <dbReference type="ChEBI" id="CHEBI:57783"/>
    </ligand>
</feature>
<feature type="binding site" evidence="1">
    <location>
        <position position="11"/>
    </location>
    <ligand>
        <name>NADPH</name>
        <dbReference type="ChEBI" id="CHEBI:57783"/>
    </ligand>
</feature>
<feature type="binding site" evidence="1">
    <location>
        <position position="12"/>
    </location>
    <ligand>
        <name>NADPH</name>
        <dbReference type="ChEBI" id="CHEBI:57783"/>
    </ligand>
</feature>
<feature type="binding site" evidence="1">
    <location>
        <position position="13"/>
    </location>
    <ligand>
        <name>NADPH</name>
        <dbReference type="ChEBI" id="CHEBI:57783"/>
    </ligand>
</feature>
<feature type="binding site" evidence="1">
    <location>
        <position position="36"/>
    </location>
    <ligand>
        <name>NADPH</name>
        <dbReference type="ChEBI" id="CHEBI:57783"/>
    </ligand>
</feature>
<feature type="binding site" evidence="1">
    <location>
        <position position="37"/>
    </location>
    <ligand>
        <name>NADPH</name>
        <dbReference type="ChEBI" id="CHEBI:57783"/>
    </ligand>
</feature>
<feature type="binding site" evidence="1">
    <location>
        <position position="38"/>
    </location>
    <ligand>
        <name>NADPH</name>
        <dbReference type="ChEBI" id="CHEBI:57783"/>
    </ligand>
</feature>
<feature type="binding site" evidence="1">
    <location>
        <position position="122"/>
    </location>
    <ligand>
        <name>NADPH</name>
        <dbReference type="ChEBI" id="CHEBI:57783"/>
    </ligand>
</feature>
<feature type="binding site" evidence="1">
    <location>
        <position position="123"/>
    </location>
    <ligand>
        <name>1-deoxy-D-xylulose 5-phosphate</name>
        <dbReference type="ChEBI" id="CHEBI:57792"/>
    </ligand>
</feature>
<feature type="binding site" evidence="1">
    <location>
        <position position="124"/>
    </location>
    <ligand>
        <name>NADPH</name>
        <dbReference type="ChEBI" id="CHEBI:57783"/>
    </ligand>
</feature>
<feature type="binding site" evidence="1">
    <location>
        <position position="148"/>
    </location>
    <ligand>
        <name>Mn(2+)</name>
        <dbReference type="ChEBI" id="CHEBI:29035"/>
    </ligand>
</feature>
<feature type="binding site" evidence="1">
    <location>
        <position position="149"/>
    </location>
    <ligand>
        <name>1-deoxy-D-xylulose 5-phosphate</name>
        <dbReference type="ChEBI" id="CHEBI:57792"/>
    </ligand>
</feature>
<feature type="binding site" evidence="1">
    <location>
        <position position="150"/>
    </location>
    <ligand>
        <name>1-deoxy-D-xylulose 5-phosphate</name>
        <dbReference type="ChEBI" id="CHEBI:57792"/>
    </ligand>
</feature>
<feature type="binding site" evidence="1">
    <location>
        <position position="150"/>
    </location>
    <ligand>
        <name>Mn(2+)</name>
        <dbReference type="ChEBI" id="CHEBI:29035"/>
    </ligand>
</feature>
<feature type="binding site" evidence="1">
    <location>
        <position position="174"/>
    </location>
    <ligand>
        <name>1-deoxy-D-xylulose 5-phosphate</name>
        <dbReference type="ChEBI" id="CHEBI:57792"/>
    </ligand>
</feature>
<feature type="binding site" evidence="1">
    <location>
        <position position="197"/>
    </location>
    <ligand>
        <name>1-deoxy-D-xylulose 5-phosphate</name>
        <dbReference type="ChEBI" id="CHEBI:57792"/>
    </ligand>
</feature>
<feature type="binding site" evidence="1">
    <location>
        <position position="203"/>
    </location>
    <ligand>
        <name>NADPH</name>
        <dbReference type="ChEBI" id="CHEBI:57783"/>
    </ligand>
</feature>
<feature type="binding site" evidence="1">
    <location>
        <position position="210"/>
    </location>
    <ligand>
        <name>1-deoxy-D-xylulose 5-phosphate</name>
        <dbReference type="ChEBI" id="CHEBI:57792"/>
    </ligand>
</feature>
<feature type="binding site" evidence="1">
    <location>
        <position position="215"/>
    </location>
    <ligand>
        <name>1-deoxy-D-xylulose 5-phosphate</name>
        <dbReference type="ChEBI" id="CHEBI:57792"/>
    </ligand>
</feature>
<feature type="binding site" evidence="1">
    <location>
        <position position="216"/>
    </location>
    <ligand>
        <name>1-deoxy-D-xylulose 5-phosphate</name>
        <dbReference type="ChEBI" id="CHEBI:57792"/>
    </ligand>
</feature>
<feature type="binding site" evidence="1">
    <location>
        <position position="219"/>
    </location>
    <ligand>
        <name>1-deoxy-D-xylulose 5-phosphate</name>
        <dbReference type="ChEBI" id="CHEBI:57792"/>
    </ligand>
</feature>
<feature type="binding site" evidence="1">
    <location>
        <position position="219"/>
    </location>
    <ligand>
        <name>Mn(2+)</name>
        <dbReference type="ChEBI" id="CHEBI:29035"/>
    </ligand>
</feature>
<protein>
    <recommendedName>
        <fullName evidence="1">1-deoxy-D-xylulose 5-phosphate reductoisomerase</fullName>
        <shortName evidence="1">DXP reductoisomerase</shortName>
        <ecNumber evidence="1">1.1.1.267</ecNumber>
    </recommendedName>
    <alternativeName>
        <fullName evidence="1">1-deoxyxylulose-5-phosphate reductoisomerase</fullName>
    </alternativeName>
    <alternativeName>
        <fullName evidence="1">2-C-methyl-D-erythritol 4-phosphate synthase</fullName>
    </alternativeName>
</protein>
<evidence type="ECO:0000255" key="1">
    <source>
        <dbReference type="HAMAP-Rule" id="MF_00183"/>
    </source>
</evidence>